<keyword id="KW-0067">ATP-binding</keyword>
<keyword id="KW-1035">Host cytoplasm</keyword>
<keyword id="KW-0378">Hydrolase</keyword>
<keyword id="KW-0489">Methyltransferase</keyword>
<keyword id="KW-0506">mRNA capping</keyword>
<keyword id="KW-0507">mRNA processing</keyword>
<keyword id="KW-0511">Multifunctional enzyme</keyword>
<keyword id="KW-0547">Nucleotide-binding</keyword>
<keyword id="KW-0548">Nucleotidyltransferase</keyword>
<keyword id="KW-0696">RNA-directed RNA polymerase</keyword>
<keyword id="KW-0949">S-adenosyl-L-methionine</keyword>
<keyword id="KW-0808">Transferase</keyword>
<keyword id="KW-0693">Viral RNA replication</keyword>
<keyword id="KW-0946">Virion</keyword>
<proteinExistence type="inferred from homology"/>
<protein>
    <recommendedName>
        <fullName>RNA-directed RNA polymerase L</fullName>
        <shortName>Protein L</shortName>
    </recommendedName>
    <alternativeName>
        <fullName>Large structural protein</fullName>
    </alternativeName>
    <alternativeName>
        <fullName>Replicase</fullName>
    </alternativeName>
    <alternativeName>
        <fullName>Transcriptase</fullName>
    </alternativeName>
    <domain>
        <recommendedName>
            <fullName>RNA-directed RNA polymerase</fullName>
            <ecNumber evidence="3">2.7.7.48</ecNumber>
        </recommendedName>
    </domain>
    <domain>
        <recommendedName>
            <fullName evidence="2">GTP phosphohydrolase</fullName>
            <ecNumber evidence="2">3.6.1.-</ecNumber>
        </recommendedName>
    </domain>
    <domain>
        <recommendedName>
            <fullName evidence="7">GDP polyribonucleotidyltransferase</fullName>
            <ecNumber evidence="2">2.7.7.88</ecNumber>
        </recommendedName>
        <alternativeName>
            <fullName evidence="7">PRNTase</fullName>
        </alternativeName>
    </domain>
    <domain>
        <recommendedName>
            <fullName evidence="7">mRNA cap methyltransferase</fullName>
            <ecNumber evidence="2">2.1.1.375</ecNumber>
        </recommendedName>
        <alternativeName>
            <fullName evidence="2">mRNA (guanine-N(7)-)-methyltransferase</fullName>
            <shortName evidence="2">G-N7-MTase</shortName>
        </alternativeName>
        <alternativeName>
            <fullName evidence="2">mRNA (nucleoside-2'-O-)-methyltransferase</fullName>
            <shortName evidence="2">N1-2'-O-MTase</shortName>
        </alternativeName>
    </domain>
</protein>
<dbReference type="EC" id="2.7.7.48" evidence="3"/>
<dbReference type="EC" id="3.6.1.-" evidence="2"/>
<dbReference type="EC" id="2.7.7.88" evidence="2"/>
<dbReference type="EC" id="2.1.1.375" evidence="2"/>
<dbReference type="EMBL" id="AY354458">
    <property type="protein sequence ID" value="AAQ55053.1"/>
    <property type="molecule type" value="Genomic_RNA"/>
</dbReference>
<dbReference type="SMR" id="Q6V1Q2"/>
<dbReference type="Proteomes" id="UP000007208">
    <property type="component" value="Genome"/>
</dbReference>
<dbReference type="GO" id="GO:0030430">
    <property type="term" value="C:host cell cytoplasm"/>
    <property type="evidence" value="ECO:0007669"/>
    <property type="project" value="UniProtKB-SubCell"/>
</dbReference>
<dbReference type="GO" id="GO:0044423">
    <property type="term" value="C:virion component"/>
    <property type="evidence" value="ECO:0007669"/>
    <property type="project" value="UniProtKB-KW"/>
</dbReference>
<dbReference type="GO" id="GO:0005524">
    <property type="term" value="F:ATP binding"/>
    <property type="evidence" value="ECO:0007669"/>
    <property type="project" value="UniProtKB-KW"/>
</dbReference>
<dbReference type="GO" id="GO:0003924">
    <property type="term" value="F:GTPase activity"/>
    <property type="evidence" value="ECO:0007669"/>
    <property type="project" value="RHEA"/>
</dbReference>
<dbReference type="GO" id="GO:0004482">
    <property type="term" value="F:mRNA 5'-cap (guanine-N7-)-methyltransferase activity"/>
    <property type="evidence" value="ECO:0007669"/>
    <property type="project" value="InterPro"/>
</dbReference>
<dbReference type="GO" id="GO:0003968">
    <property type="term" value="F:RNA-directed RNA polymerase activity"/>
    <property type="evidence" value="ECO:0007669"/>
    <property type="project" value="UniProtKB-KW"/>
</dbReference>
<dbReference type="GO" id="GO:0039689">
    <property type="term" value="P:negative stranded viral RNA replication"/>
    <property type="evidence" value="ECO:0000250"/>
    <property type="project" value="UniProtKB"/>
</dbReference>
<dbReference type="GO" id="GO:0039697">
    <property type="term" value="P:negative stranded viral RNA transcription"/>
    <property type="evidence" value="ECO:0000250"/>
    <property type="project" value="UniProtKB"/>
</dbReference>
<dbReference type="Gene3D" id="3.40.50.150">
    <property type="entry name" value="Vaccinia Virus protein VP39"/>
    <property type="match status" value="1"/>
</dbReference>
<dbReference type="InterPro" id="IPR039736">
    <property type="entry name" value="L_poly_C"/>
</dbReference>
<dbReference type="InterPro" id="IPR026890">
    <property type="entry name" value="Mononeg_mRNAcap"/>
</dbReference>
<dbReference type="InterPro" id="IPR014023">
    <property type="entry name" value="Mononeg_RNA_pol_cat"/>
</dbReference>
<dbReference type="InterPro" id="IPR025786">
    <property type="entry name" value="Mononega_L_MeTrfase"/>
</dbReference>
<dbReference type="InterPro" id="IPR017235">
    <property type="entry name" value="RNA-dir_pol_L_filovirus"/>
</dbReference>
<dbReference type="InterPro" id="IPR029063">
    <property type="entry name" value="SAM-dependent_MTases_sf"/>
</dbReference>
<dbReference type="NCBIfam" id="TIGR04198">
    <property type="entry name" value="paramyx_RNAcap"/>
    <property type="match status" value="1"/>
</dbReference>
<dbReference type="Pfam" id="PF14318">
    <property type="entry name" value="Mononeg_mRNAcap"/>
    <property type="match status" value="1"/>
</dbReference>
<dbReference type="Pfam" id="PF00946">
    <property type="entry name" value="Mononeg_RNA_pol"/>
    <property type="match status" value="1"/>
</dbReference>
<dbReference type="PIRSF" id="PIRSF037548">
    <property type="entry name" value="RNA_pol_Filoviridae"/>
    <property type="match status" value="1"/>
</dbReference>
<dbReference type="PROSITE" id="PS50526">
    <property type="entry name" value="RDRP_SSRNA_NEG_NONSEG"/>
    <property type="match status" value="1"/>
</dbReference>
<dbReference type="PROSITE" id="PS51590">
    <property type="entry name" value="SAM_MT_MNV_L"/>
    <property type="match status" value="1"/>
</dbReference>
<comment type="function">
    <text evidence="2">RNA-directed RNA polymerase that catalyzes the transcription of viral mRNAs, their capping and polyadenylation. The template is composed of the viral RNA tightly encapsidated by the nucleoprotein (N). The viral polymerase binds to the genomic RNA at the 3' leader promoter, and transcribes subsequently all viral mRNAs with a decreasing efficiency. The first gene is the most transcribed, and the last the least transcribed. The viral phosphoprotein acts as a processivity factor. Capping is concomitant with initiation of mRNA transcription. Indeed, a GDP polyribonucleotidyl transferase (PRNTase) adds the cap structure when the nascent RNA chain length has reached few nucleotides. Ribose 2'-O methylation of viral mRNA cap precedes and facilitates subsequent guanine-N-7 methylation, both activities being carried by the viral polymerase. Polyadenylation of mRNAs occur by a stuttering mechanism at a slipery stop site present at the end viral genes. After finishing transcription of a mRNA, the polymerase can resume transcription of the downstream gene.</text>
</comment>
<comment type="function">
    <text evidence="2">RNA-directed RNA polymerase that catalyzes the replication of viral genomic RNA. The template is composed of the viral RNA tightly encapsidated by the nucleoprotein (N). The replicase mode is dependent on intracellular N protein concentration. In this mode, the polymerase replicates the whole viral genome without recognizing transcriptional signals, and the replicated genome is not caped or polyadenylated.</text>
</comment>
<comment type="catalytic activity">
    <reaction evidence="4">
        <text>RNA(n) + a ribonucleoside 5'-triphosphate = RNA(n+1) + diphosphate</text>
        <dbReference type="Rhea" id="RHEA:21248"/>
        <dbReference type="Rhea" id="RHEA-COMP:14527"/>
        <dbReference type="Rhea" id="RHEA-COMP:17342"/>
        <dbReference type="ChEBI" id="CHEBI:33019"/>
        <dbReference type="ChEBI" id="CHEBI:61557"/>
        <dbReference type="ChEBI" id="CHEBI:140395"/>
        <dbReference type="EC" id="2.7.7.48"/>
    </reaction>
</comment>
<comment type="catalytic activity">
    <reaction evidence="2">
        <text>a 5'-end (5'-triphosphoguanosine)-adenylyl-adenylyl-cytidylyl-adenosine in mRNA + 2 S-adenosyl-L-methionine = a 5'-end (N(7)-methyl 5'-triphosphoguanosine)-(2'-O-methyladenylyl)-adenylyl-cytidylyl-adenosine in mRNA + 2 S-adenosyl-L-homocysteine + H(+)</text>
        <dbReference type="Rhea" id="RHEA:65376"/>
        <dbReference type="Rhea" id="RHEA-COMP:16797"/>
        <dbReference type="Rhea" id="RHEA-COMP:16798"/>
        <dbReference type="ChEBI" id="CHEBI:15378"/>
        <dbReference type="ChEBI" id="CHEBI:57856"/>
        <dbReference type="ChEBI" id="CHEBI:59789"/>
        <dbReference type="ChEBI" id="CHEBI:156483"/>
        <dbReference type="ChEBI" id="CHEBI:156484"/>
        <dbReference type="EC" id="2.1.1.375"/>
    </reaction>
</comment>
<comment type="catalytic activity">
    <reaction evidence="2">
        <text>a 5'-end (5'-triphosphoguanosine)-adenylyl-adenylyl-cytidylyl-adenosine in mRNA + S-adenosyl-L-methionine = a 5'-end (5'-triphosphoguanosine)-(2'-O-methyladenylyl)-adenylyl-cytidylyl-adenosine in mRNA + S-adenosyl-L-homocysteine + H(+)</text>
        <dbReference type="Rhea" id="RHEA:65380"/>
        <dbReference type="Rhea" id="RHEA-COMP:16797"/>
        <dbReference type="Rhea" id="RHEA-COMP:16801"/>
        <dbReference type="ChEBI" id="CHEBI:15378"/>
        <dbReference type="ChEBI" id="CHEBI:57856"/>
        <dbReference type="ChEBI" id="CHEBI:59789"/>
        <dbReference type="ChEBI" id="CHEBI:156482"/>
        <dbReference type="ChEBI" id="CHEBI:156484"/>
    </reaction>
</comment>
<comment type="catalytic activity">
    <reaction evidence="3">
        <text>a 5'-end triphospho-adenylyl-adenylyl-cytidylyl-adenosine in mRNA + GDP + H(+) = a 5'-end (5'-triphosphoguanosine)-adenylyl-adenylyl-cytidylyl-adenosine in mRNA + diphosphate</text>
        <dbReference type="Rhea" id="RHEA:65436"/>
        <dbReference type="Rhea" id="RHEA-COMP:16797"/>
        <dbReference type="Rhea" id="RHEA-COMP:16799"/>
        <dbReference type="ChEBI" id="CHEBI:15378"/>
        <dbReference type="ChEBI" id="CHEBI:33019"/>
        <dbReference type="ChEBI" id="CHEBI:58189"/>
        <dbReference type="ChEBI" id="CHEBI:156484"/>
        <dbReference type="ChEBI" id="CHEBI:156503"/>
        <dbReference type="EC" id="2.7.7.88"/>
    </reaction>
</comment>
<comment type="catalytic activity">
    <reaction evidence="2">
        <text>a 5'-end (5'-triphosphoguanosine)-(2'-O-methyladenylyl)-adenylyl-cytidylyl-adenosine in mRNA + S-adenosyl-L-methionine = a 5'-end (N(7)-methyl 5'-triphosphoguanosine)-(2'-O-methyladenylyl)-adenylyl-cytidylyl-adenosine in mRNA + S-adenosyl-L-homocysteine</text>
        <dbReference type="Rhea" id="RHEA:65440"/>
        <dbReference type="Rhea" id="RHEA-COMP:16798"/>
        <dbReference type="Rhea" id="RHEA-COMP:16801"/>
        <dbReference type="ChEBI" id="CHEBI:57856"/>
        <dbReference type="ChEBI" id="CHEBI:59789"/>
        <dbReference type="ChEBI" id="CHEBI:156482"/>
        <dbReference type="ChEBI" id="CHEBI:156483"/>
    </reaction>
</comment>
<comment type="catalytic activity">
    <reaction evidence="3">
        <text>GTP + H2O = GDP + phosphate + H(+)</text>
        <dbReference type="Rhea" id="RHEA:19669"/>
        <dbReference type="ChEBI" id="CHEBI:15377"/>
        <dbReference type="ChEBI" id="CHEBI:15378"/>
        <dbReference type="ChEBI" id="CHEBI:37565"/>
        <dbReference type="ChEBI" id="CHEBI:43474"/>
        <dbReference type="ChEBI" id="CHEBI:58189"/>
    </reaction>
</comment>
<comment type="subcellular location">
    <subcellularLocation>
        <location>Host cytoplasm</location>
    </subcellularLocation>
    <subcellularLocation>
        <location evidence="1">Virion</location>
    </subcellularLocation>
</comment>
<sequence>MATQHTQYPDARLSSPIVLDQCDLVTRACGLYSSYSLNPQLRNCKLPKHIYRLKYDVTVTKFLSDVPVATLPIDFIVPILLKALSGNGFCPVEPRCQQFLDEIIKYTMQDALFLKYYLKNVGAQEDCVDDHFQEKILSSIQGNEFLHQMFFWYDLAILTRRGRLNRGNSRSTWFVHDDLIDILGYGDYVFWKIPISMLPLNTQGIPHAAMDWYQASVFKEAVQGHTHIVSVSTADVLIMCKDLITCRFNTTLISKIAEIEDPVCSDYPNFKIVSMLYQSGDYLLSILGSDGYKIIKFLEPLCLAKIQLCSKYTERKGRFLTQMHLAVNHTLEEITEMRALKPSQAQKIREFHRTLIRLEMTPQQLCELFSIQKHWGHPVLHSETAIQKVKKHATVLKALRPIVIFETYCVFKYSIAKHYFDSQGSWYSVTSDRNLTPGLNSYIKRNQFPPLPMIKELLWEFYHLDHPPLFSTKIISDLSIFIKDRATAVERTCWDAVFEPNVLGYNPPHKFSTKRVPEQFLEQENFSIENVLSYAQKLEYLLPQYRNFSFSLKEKELNVGRTFGKLPYPTRNVQTLCEALLADGLAKAFPSNMMVVTEREQKESLLHQASWHHTSDDFGEHATVRGSSFVTDLEKYNLAFRYEFTAPFIEYCNRCYGVKNVFNWMHYTIPQCYMHVSDYYNPPHNLTLENRDNPPEGPSSYRGHMGGIEGLQQKLWTSISCAQISLVEIKTGFKLRSAVMGDNQCITVLSVFPLETDADEQEQSAEDNAARVAASLAKVTSACGIFLKPDETFVHSGFIYFGKKQYLNGVQLPQSLKTATRMAPLSDAIFDDLQGTLASIGTAFERSISETRHIFPCRITAAFHTFFSVRILQYHHLGFNKGFDLGQLTLGKPLDFGTISLALAVPQVLGGLSFLNPEKCFYRNLGDPVTSGLFQLKTYLRMIEMDDLFLPLIAKNPGNCTAIDFVLNPSGLNVPGSQDLTSFLRQIVRRTITLSAKNKLINTLFHASADFEDEMVCKWLLSSTPVMSRFAADIFSRTPSGKRLQILGYLEGTRTLLASRIINNNTETPVLDRLRKITLQRWSLWFSYLDHCDNILAEALTQITCTVDLAQILREYSWAHILEGRPLIGATLPCMIEQFKVFWLKPYEQCPQCSNAKQPGGKPFVSVAVKKHIVSAWPNASRLSWTIGDGIPYIGSRTEDKIGQPAIKPKCPSAALREAIELASRLTWVTQGSSNSDLLIKPFLEARVNLSVQEILQMTPSHYSGNIVHRYNDQYSPHSFMANRMSNSATRLIVSTNTLGEFSGGGQSARDSNIIFQNVINYAVALFDIKFRNTEATDIQYNRAHLHLTKCCTREVPAQYLTYTSTLDLDLTRYRENELIYDNNPLKGGLNCNISFDNPFFQGKQLNIIEDDLIRLPHLSGWELAKTIMQSIISDSNNSSTDPISSGETRSFTTHFLTYPKIGLLYSFGAFVSYYLGNTILRTKKLTLDNFLYYLTTQIHNLPHRSLRILKPTFKHASVMSRLMSIDPHFSIYIGGAAGDRGLSDAARLFLRTSISSFLTFVKEWIINRGTIVPLWIVYPLEGQNPTPVNNFLYQIVELLVHDSSRQQALKTTISDHVHPHDNLVYTCKSTASNFFHASLAYWRSRHRNSNRKYLARDSSTRSSTNNSDGHIERSQEQTTRDPHDGTERNLVLQMSHEIKRTTIPQENTHQGPSFQSFLSYSACGTANPKLNFDRSRHNVKSQDHNSASKREGHQIISHRLVLPFFTLSQGTRQLTSSNESQTQDEISKYLRQLRSVIDTTVYCRFTGIVSSMHYKLDEVLWEIESFKSAVTLAEGEGAGALLLIQKYQVKTLFFNTLATESSIESEIVSGMTTPRMLLPVMSKFHNDQIEIILNNSASQITDITNPTWFKDQRARLPKQVEVITMDAETTENINRSKLYEAVYKLILHHIDPSVLKAVVLKVFLSDTEGMLWLNDNLAPFFATGYLIKPITSSARSSEWYLCLTNFLSTTRKMPHQNHLSCKQVILTALQLQIQRSPYWLSHLTQYADCDLHLSYIRLGFPSLEKVLYHRYNLVDSKRGPLVSITQHLAHLRAEIRELTNDYNQQRQSRTQTYHFIRTAKGRITKLVNDYLKFFLIVQALKHNGTWQAEFKKLPELISVCNRFYHIRDCNCEERFLVQTLYLHRMQDSEVKLIERLTGLLSLFPDGLYRFD</sequence>
<organism>
    <name type="scientific">Zaire ebolavirus (strain Kikwit-95)</name>
    <name type="common">ZEBOV</name>
    <name type="synonym">Zaire Ebola virus</name>
    <dbReference type="NCBI Taxonomy" id="128951"/>
    <lineage>
        <taxon>Viruses</taxon>
        <taxon>Riboviria</taxon>
        <taxon>Orthornavirae</taxon>
        <taxon>Negarnaviricota</taxon>
        <taxon>Haploviricotina</taxon>
        <taxon>Monjiviricetes</taxon>
        <taxon>Mononegavirales</taxon>
        <taxon>Filoviridae</taxon>
        <taxon>Orthoebolavirus</taxon>
        <taxon>Orthoebolavirus zairense</taxon>
        <taxon>Zaire ebolavirus</taxon>
    </lineage>
</organism>
<accession>Q6V1Q2</accession>
<feature type="chain" id="PRO_0000245050" description="RNA-directed RNA polymerase L">
    <location>
        <begin position="1"/>
        <end position="2212"/>
    </location>
</feature>
<feature type="domain" description="RdRp catalytic" evidence="4">
    <location>
        <begin position="625"/>
        <end position="809"/>
    </location>
</feature>
<feature type="domain" description="Mononegavirus-type SAM-dependent 2'-O-MTase" evidence="5">
    <location>
        <begin position="1805"/>
        <end position="2003"/>
    </location>
</feature>
<feature type="region of interest" description="Disordered" evidence="6">
    <location>
        <begin position="1653"/>
        <end position="1688"/>
    </location>
</feature>
<feature type="compositionally biased region" description="Basic and acidic residues" evidence="6">
    <location>
        <begin position="1670"/>
        <end position="1688"/>
    </location>
</feature>
<reference key="1">
    <citation type="submission" date="2003-07" db="EMBL/GenBank/DDBJ databases">
        <authorList>
            <person name="Chain P.S.G."/>
            <person name="Ichou M.A."/>
            <person name="Malfatti S.A."/>
            <person name="Hajjaj A."/>
            <person name="Vergez L.M."/>
            <person name="Paragas J."/>
            <person name="Do L.H."/>
            <person name="Jahrling P.B."/>
            <person name="Smith K.L."/>
            <person name="McCready P.M."/>
            <person name="Ibrahim M.S."/>
        </authorList>
    </citation>
    <scope>NUCLEOTIDE SEQUENCE [GENOMIC RNA]</scope>
</reference>
<organismHost>
    <name type="scientific">Epomops franqueti</name>
    <name type="common">Franquet's epauletted fruit bat</name>
    <name type="synonym">Epomophorus franqueti</name>
    <dbReference type="NCBI Taxonomy" id="77231"/>
</organismHost>
<organismHost>
    <name type="scientific">Homo sapiens</name>
    <name type="common">Human</name>
    <dbReference type="NCBI Taxonomy" id="9606"/>
</organismHost>
<organismHost>
    <name type="scientific">Myonycteris torquata</name>
    <name type="common">Little collared fruit bat</name>
    <dbReference type="NCBI Taxonomy" id="77243"/>
</organismHost>
<name>L_EBOZ5</name>
<gene>
    <name type="primary">L</name>
</gene>
<evidence type="ECO:0000250" key="1"/>
<evidence type="ECO:0000250" key="2">
    <source>
        <dbReference type="UniProtKB" id="P03523"/>
    </source>
</evidence>
<evidence type="ECO:0000250" key="3">
    <source>
        <dbReference type="UniProtKB" id="P28887"/>
    </source>
</evidence>
<evidence type="ECO:0000255" key="4">
    <source>
        <dbReference type="PROSITE-ProRule" id="PRU00539"/>
    </source>
</evidence>
<evidence type="ECO:0000255" key="5">
    <source>
        <dbReference type="PROSITE-ProRule" id="PRU00923"/>
    </source>
</evidence>
<evidence type="ECO:0000256" key="6">
    <source>
        <dbReference type="SAM" id="MobiDB-lite"/>
    </source>
</evidence>
<evidence type="ECO:0000305" key="7"/>